<comment type="function">
    <molecule>Mature tail fiber protein Gp37</molecule>
    <text evidence="1">Constitues the trimeric tip of the long tail fiber that mediates the attachment to the host receptor, together with the receptor-recognizing protein Gp38.</text>
</comment>
<comment type="function">
    <molecule>Intramolecular chaperone</molecule>
    <text evidence="3">The C-terminal chaperone protein mediates homotrimerization and proper folding of the catalytic trimer.</text>
</comment>
<comment type="subunit">
    <text evidence="1">Homotrimer. Interacts with the receptor-recognizing protein Gp38.</text>
</comment>
<comment type="subcellular location">
    <subcellularLocation>
        <location evidence="1">Virion</location>
    </subcellularLocation>
</comment>
<comment type="PTM">
    <text evidence="1">Proteolytic cleavage and release of the chaperone in the host cytosol stabilizes the folded protein.</text>
</comment>
<comment type="similarity">
    <text evidence="5">Belongs to the S16-like long tail fiber protein Gp37 family.</text>
</comment>
<evidence type="ECO:0000250" key="1">
    <source>
        <dbReference type="UniProtKB" id="M1EAS5"/>
    </source>
</evidence>
<evidence type="ECO:0000250" key="2">
    <source>
        <dbReference type="UniProtKB" id="P49714"/>
    </source>
</evidence>
<evidence type="ECO:0000250" key="3">
    <source>
        <dbReference type="UniProtKB" id="Q04830"/>
    </source>
</evidence>
<evidence type="ECO:0000255" key="4">
    <source>
        <dbReference type="PROSITE-ProRule" id="PRU01025"/>
    </source>
</evidence>
<evidence type="ECO:0000305" key="5"/>
<organism>
    <name type="scientific">Enterobacteria phage K3</name>
    <name type="common">Bacteriophage K3</name>
    <dbReference type="NCBI Taxonomy" id="10674"/>
    <lineage>
        <taxon>Viruses</taxon>
        <taxon>Duplodnaviria</taxon>
        <taxon>Heunggongvirae</taxon>
        <taxon>Uroviricota</taxon>
        <taxon>Caudoviricetes</taxon>
        <taxon>Straboviridae</taxon>
        <taxon>Tevenvirinae</taxon>
        <taxon>Tequatrovirus</taxon>
    </lineage>
</organism>
<sequence>MATLKQIQFKRSKIAGTRPAASVLAEGELAINLKDSTIFTKDDSGNIIDLSISAGGNISGNVTIDGTLRVNGPINNFGNFSTSGQITAGSSISAQVFRALQGSFYSRASTGETANAHLWFENADGTERGVIYARPQTTTDGEIRLRVRQGTGSTTNSEFYFRSINGGEFQANRILASDSLVTKRIAVDTVIHDAKAFGQYDSHSLVNYVYPGTGETNGVNYLRKVRAKAAGTMWHEICTAQTGQADEMSWWTGNTPQSKQYGIRNDGRIAGRNSLALGTFTTNFPSSDYGNVGVMGDKYLVLGDTVTGLSYKKTGVFDLVGGGYSVASITPDSFRSTRKGIFGRSEDQGATWIMPGTNAALLSVQTQADTNNAGDGQTHIGYNAGGKMNHYFRGTGQMNINTQQGMEINPGILKLVTGSNNVQFYADGNISSIQPVKLDNELFLNSSNNTAGLKFGAPSKVDGTRAIQWNGGTREGQNKNYVIIKAWGNSFNATGDRSRETVFQVSDSQGYYFYAHRKAPTGDETIGRIEAQFAGELNAKSINAVENFKVNGLSTLVGGVTMSNGLNLTGGSSITGQVKIGGTYDALRIWNSRYGAIFRRSETSLHIIPTNENEGENGAINNLRPFSIELGTGTVSMLHDVHLGNSGSSTGLLQVSNSLKTIKMICPVTINERNAALTLDSPSSSSANYLQGSKAGTKSWYVGLGGAGNDLSLYSQSYGHGLVISDNFVSISKPLKVGNAQLGTDGNITGGSGNFANLNTTLNRKVNSGFITYGATSGWYKFATVTMPQSTSTAFFKIVGGSGFNSGLFTQCNIAEIVLRTGNERPADLNAVLYTRTIGAAFKNIAVNNVSGDTYDIYVYAGTYCNQLACEWACTENATISVIGINSSTQSPVDDLPDTAVNGQVANVLNNLVDSGKGKRYEAESEIAINSQTGIRIRSNADKTGSVATMLRNDGGSFYILFTDKNDTDGAATVNGEWNSKRPFAINLTTGEVMMNNGIAVRSAALFYNSINVKDNGSINFDKSGANPRNMRIFHAGDASRGNRIEIADETNYIAYFEKAPGGANRFVVNNATVSGVNQMNSFGVNTSNALGGNSITFGDTDTGIKQNGDGLLDIYANNAQVFRFQNGDLYSYKNINAPNVYIRSDIRLKSNFKPIENALDKVEKLNGVIYDKAEYIGGEAIETEAGIVAQTLQDVLPEAVRETEDSKGNKILTVSSQAQIALLVEAVKTLSARVKELESKLM</sequence>
<reference key="1">
    <citation type="journal article" date="1986" name="J. Mol. Biol.">
        <title>DNA sequence of the tail fiber genes 37, encoding the receptor recognizing part of the fiber, of bacteriophages T2 and K3.</title>
        <authorList>
            <person name="Riede I."/>
            <person name="Drexler K."/>
            <person name="Eschbach M.-L."/>
            <person name="Henning U."/>
        </authorList>
    </citation>
    <scope>NUCLEOTIDE SEQUENCE [GENOMIC DNA]</scope>
</reference>
<reference key="2">
    <citation type="journal article" date="1984" name="Mol. Gen. Genet.">
        <title>DNA sequence heterogeneity in the genes of T-even type Escherichia coli phages encoding the receptor recognizing protein of the long tail fibres.</title>
        <authorList>
            <person name="Riede I."/>
            <person name="Eschbach M.L."/>
            <person name="Henning U."/>
        </authorList>
    </citation>
    <scope>NUCLEOTIDE SEQUENCE [GENOMIC DNA] OF 158-211</scope>
</reference>
<feature type="chain" id="PRO_0000165028" description="Long tail fiber protein Gp37">
    <location>
        <begin position="1"/>
        <end position="1243"/>
    </location>
</feature>
<feature type="chain" id="PRO_0000458677" description="Mature tail fiber protein Gp37">
    <location>
        <begin position="1"/>
        <end position="1145"/>
    </location>
</feature>
<feature type="chain" id="PRO_0000458678" description="Intramolecular chaperone" evidence="3">
    <location>
        <begin position="1146"/>
        <end position="1243"/>
    </location>
</feature>
<feature type="domain" description="Peptidase S74" evidence="4">
    <location>
        <begin position="1145"/>
        <end position="1242"/>
    </location>
</feature>
<feature type="region of interest" description="Interaction with the receptor-recognizing protein gp38" evidence="1">
    <location>
        <begin position="1140"/>
        <end position="1143"/>
    </location>
</feature>
<feature type="site" description="Cleavage; by autolysis" evidence="2">
    <location>
        <begin position="1145"/>
        <end position="1146"/>
    </location>
</feature>
<organismHost>
    <name type="scientific">Escherichia coli</name>
    <dbReference type="NCBI Taxonomy" id="562"/>
</organismHost>
<name>FIB37_BPK3</name>
<gene>
    <name type="primary">37</name>
</gene>
<proteinExistence type="inferred from homology"/>
<dbReference type="EMBL" id="X04747">
    <property type="protein sequence ID" value="CAA28445.1"/>
    <property type="molecule type" value="Genomic_DNA"/>
</dbReference>
<dbReference type="EMBL" id="X00613">
    <property type="protein sequence ID" value="CAA25250.1"/>
    <property type="molecule type" value="Genomic_DNA"/>
</dbReference>
<dbReference type="PIR" id="S07278">
    <property type="entry name" value="S07278"/>
</dbReference>
<dbReference type="SMR" id="Q38394"/>
<dbReference type="GO" id="GO:0098024">
    <property type="term" value="C:virus tail, fiber"/>
    <property type="evidence" value="ECO:0007669"/>
    <property type="project" value="UniProtKB-KW"/>
</dbReference>
<dbReference type="GO" id="GO:0046718">
    <property type="term" value="P:symbiont entry into host cell"/>
    <property type="evidence" value="ECO:0007669"/>
    <property type="project" value="UniProtKB-KW"/>
</dbReference>
<dbReference type="GO" id="GO:0019062">
    <property type="term" value="P:virion attachment to host cell"/>
    <property type="evidence" value="ECO:0007669"/>
    <property type="project" value="UniProtKB-KW"/>
</dbReference>
<dbReference type="Gene3D" id="6.20.80.10">
    <property type="match status" value="1"/>
</dbReference>
<dbReference type="InterPro" id="IPR048390">
    <property type="entry name" value="Gp34_trimer"/>
</dbReference>
<dbReference type="InterPro" id="IPR048388">
    <property type="entry name" value="Gp37_trimer"/>
</dbReference>
<dbReference type="InterPro" id="IPR030392">
    <property type="entry name" value="S74_ICA"/>
</dbReference>
<dbReference type="Pfam" id="PF21446">
    <property type="entry name" value="Gp34_trimer"/>
    <property type="match status" value="1"/>
</dbReference>
<dbReference type="Pfam" id="PF20744">
    <property type="entry name" value="gp37_trimer"/>
    <property type="match status" value="1"/>
</dbReference>
<dbReference type="Pfam" id="PF13884">
    <property type="entry name" value="Peptidase_S74"/>
    <property type="match status" value="1"/>
</dbReference>
<dbReference type="PROSITE" id="PS51688">
    <property type="entry name" value="ICA"/>
    <property type="match status" value="1"/>
</dbReference>
<accession>Q38394</accession>
<accession>Q47321</accession>
<protein>
    <recommendedName>
        <fullName>Long tail fiber protein Gp37</fullName>
        <shortName>Protein Gp37</shortName>
    </recommendedName>
    <alternativeName>
        <fullName evidence="5">Gene product 37</fullName>
        <shortName evidence="5">gp37</shortName>
    </alternativeName>
    <alternativeName>
        <fullName evidence="5">Receptor-recognizing protein</fullName>
    </alternativeName>
    <component>
        <recommendedName>
            <fullName evidence="2">Mature tail fiber protein Gp37</fullName>
        </recommendedName>
    </component>
    <component>
        <recommendedName>
            <fullName evidence="3">Intramolecular chaperone</fullName>
        </recommendedName>
    </component>
</protein>
<keyword id="KW-0945">Host-virus interaction</keyword>
<keyword id="KW-1161">Viral attachment to host cell</keyword>
<keyword id="KW-1230">Viral tail fiber protein</keyword>
<keyword id="KW-1227">Viral tail protein</keyword>
<keyword id="KW-0946">Virion</keyword>
<keyword id="KW-1160">Virus entry into host cell</keyword>